<keyword id="KW-0067">ATP-binding</keyword>
<keyword id="KW-0997">Cell inner membrane</keyword>
<keyword id="KW-1003">Cell membrane</keyword>
<keyword id="KW-0472">Membrane</keyword>
<keyword id="KW-0547">Nucleotide-binding</keyword>
<keyword id="KW-1185">Reference proteome</keyword>
<keyword id="KW-0677">Repeat</keyword>
<keyword id="KW-0762">Sugar transport</keyword>
<keyword id="KW-1278">Translocase</keyword>
<keyword id="KW-0813">Transport</keyword>
<reference key="1">
    <citation type="journal article" date="2005" name="Nucleic Acids Res.">
        <title>Genome dynamics and diversity of Shigella species, the etiologic agents of bacillary dysentery.</title>
        <authorList>
            <person name="Yang F."/>
            <person name="Yang J."/>
            <person name="Zhang X."/>
            <person name="Chen L."/>
            <person name="Jiang Y."/>
            <person name="Yan Y."/>
            <person name="Tang X."/>
            <person name="Wang J."/>
            <person name="Xiong Z."/>
            <person name="Dong J."/>
            <person name="Xue Y."/>
            <person name="Zhu Y."/>
            <person name="Xu X."/>
            <person name="Sun L."/>
            <person name="Chen S."/>
            <person name="Nie H."/>
            <person name="Peng J."/>
            <person name="Xu J."/>
            <person name="Wang Y."/>
            <person name="Yuan Z."/>
            <person name="Wen Y."/>
            <person name="Yao Z."/>
            <person name="Shen Y."/>
            <person name="Qiang B."/>
            <person name="Hou Y."/>
            <person name="Yu J."/>
            <person name="Jin Q."/>
        </authorList>
    </citation>
    <scope>NUCLEOTIDE SEQUENCE [LARGE SCALE GENOMIC DNA]</scope>
    <source>
        <strain>Ss046</strain>
    </source>
</reference>
<sequence>MQQSTPYLSFRGIGKTFPGVKALTDISFDCYAGQVHALMGENGAGKSTLLKILSGNYAPTTGSVVINGQEMSFSDTTAALNAGVAIIYQELHLVPEMTVAENIYLGQLPHKGGIVNRSLLNYEAGLQLKHLGMDIDPDTPLKYLSIGQWQMVEIAKALARNAKIIAFDEPTSSLSAREIDNLFRVIRELRKEGRVILYVSHRMEEIFALSDAITVFKDGRYVKTFTDMQQVDHDALVQAMVGRDIGDIYGWQPRSYGEERLRLDAVKAPGVRTPISLAVRSGEIVGLFGLVGAGRSELMKGLFGGTQITAGQVYIDQQPIDIRKPSHAIAAGMMLCPEDRKAEGIIPVHSVRDNINISARRKHVLGGCVINNGWEENNADQHIRSLNIKTPGAEQLIMNLSGGNQQKAILGRWLSEEMKVILLDEPTRSIDVGAKHEIYNVIYALAAQGVAVLFASSDLPEVLGVADRIVVMREGEIAGELLHEQADERQALSLAMPKVSQAVA</sequence>
<protein>
    <recommendedName>
        <fullName evidence="1">Arabinose import ATP-binding protein AraG</fullName>
        <ecNumber evidence="1">7.5.2.12</ecNumber>
    </recommendedName>
</protein>
<proteinExistence type="inferred from homology"/>
<dbReference type="EC" id="7.5.2.12" evidence="1"/>
<dbReference type="EMBL" id="CP000038">
    <property type="protein sequence ID" value="AAZ87935.1"/>
    <property type="molecule type" value="Genomic_DNA"/>
</dbReference>
<dbReference type="RefSeq" id="WP_001187814.1">
    <property type="nucleotide sequence ID" value="NC_007384.1"/>
</dbReference>
<dbReference type="SMR" id="Q3Z2S7"/>
<dbReference type="GeneID" id="93776202"/>
<dbReference type="KEGG" id="ssn:SSON_1218"/>
<dbReference type="HOGENOM" id="CLU_000604_92_3_6"/>
<dbReference type="Proteomes" id="UP000002529">
    <property type="component" value="Chromosome"/>
</dbReference>
<dbReference type="GO" id="GO:0005886">
    <property type="term" value="C:plasma membrane"/>
    <property type="evidence" value="ECO:0007669"/>
    <property type="project" value="UniProtKB-SubCell"/>
</dbReference>
<dbReference type="GO" id="GO:0015612">
    <property type="term" value="F:ABC-type L-arabinose transporter activity"/>
    <property type="evidence" value="ECO:0007669"/>
    <property type="project" value="UniProtKB-EC"/>
</dbReference>
<dbReference type="GO" id="GO:0005524">
    <property type="term" value="F:ATP binding"/>
    <property type="evidence" value="ECO:0007669"/>
    <property type="project" value="UniProtKB-KW"/>
</dbReference>
<dbReference type="GO" id="GO:0016887">
    <property type="term" value="F:ATP hydrolysis activity"/>
    <property type="evidence" value="ECO:0007669"/>
    <property type="project" value="InterPro"/>
</dbReference>
<dbReference type="CDD" id="cd03216">
    <property type="entry name" value="ABC_Carb_Monos_I"/>
    <property type="match status" value="1"/>
</dbReference>
<dbReference type="CDD" id="cd03215">
    <property type="entry name" value="ABC_Carb_Monos_II"/>
    <property type="match status" value="1"/>
</dbReference>
<dbReference type="FunFam" id="3.40.50.300:FF:000126">
    <property type="entry name" value="Galactose/methyl galactoside import ATP-binding protein MglA"/>
    <property type="match status" value="1"/>
</dbReference>
<dbReference type="FunFam" id="3.40.50.300:FF:000127">
    <property type="entry name" value="Ribose import ATP-binding protein RbsA"/>
    <property type="match status" value="1"/>
</dbReference>
<dbReference type="Gene3D" id="3.40.50.300">
    <property type="entry name" value="P-loop containing nucleotide triphosphate hydrolases"/>
    <property type="match status" value="2"/>
</dbReference>
<dbReference type="InterPro" id="IPR003593">
    <property type="entry name" value="AAA+_ATPase"/>
</dbReference>
<dbReference type="InterPro" id="IPR050107">
    <property type="entry name" value="ABC_carbohydrate_import_ATPase"/>
</dbReference>
<dbReference type="InterPro" id="IPR003439">
    <property type="entry name" value="ABC_transporter-like_ATP-bd"/>
</dbReference>
<dbReference type="InterPro" id="IPR017871">
    <property type="entry name" value="ABC_transporter-like_CS"/>
</dbReference>
<dbReference type="InterPro" id="IPR027417">
    <property type="entry name" value="P-loop_NTPase"/>
</dbReference>
<dbReference type="NCBIfam" id="NF008442">
    <property type="entry name" value="PRK11288.1"/>
    <property type="match status" value="1"/>
</dbReference>
<dbReference type="PANTHER" id="PTHR43790:SF6">
    <property type="entry name" value="ARABINOSE IMPORT ATP-BINDING PROTEIN ARAG"/>
    <property type="match status" value="1"/>
</dbReference>
<dbReference type="PANTHER" id="PTHR43790">
    <property type="entry name" value="CARBOHYDRATE TRANSPORT ATP-BINDING PROTEIN MG119-RELATED"/>
    <property type="match status" value="1"/>
</dbReference>
<dbReference type="Pfam" id="PF00005">
    <property type="entry name" value="ABC_tran"/>
    <property type="match status" value="2"/>
</dbReference>
<dbReference type="SMART" id="SM00382">
    <property type="entry name" value="AAA"/>
    <property type="match status" value="2"/>
</dbReference>
<dbReference type="SUPFAM" id="SSF52540">
    <property type="entry name" value="P-loop containing nucleoside triphosphate hydrolases"/>
    <property type="match status" value="2"/>
</dbReference>
<dbReference type="PROSITE" id="PS00211">
    <property type="entry name" value="ABC_TRANSPORTER_1"/>
    <property type="match status" value="1"/>
</dbReference>
<dbReference type="PROSITE" id="PS50893">
    <property type="entry name" value="ABC_TRANSPORTER_2"/>
    <property type="match status" value="2"/>
</dbReference>
<dbReference type="PROSITE" id="PS51268">
    <property type="entry name" value="ARAG"/>
    <property type="match status" value="1"/>
</dbReference>
<name>ARAG_SHISS</name>
<evidence type="ECO:0000255" key="1">
    <source>
        <dbReference type="HAMAP-Rule" id="MF_01721"/>
    </source>
</evidence>
<accession>Q3Z2S7</accession>
<gene>
    <name evidence="1" type="primary">araG</name>
    <name type="ordered locus">SSON_1218</name>
</gene>
<organism>
    <name type="scientific">Shigella sonnei (strain Ss046)</name>
    <dbReference type="NCBI Taxonomy" id="300269"/>
    <lineage>
        <taxon>Bacteria</taxon>
        <taxon>Pseudomonadati</taxon>
        <taxon>Pseudomonadota</taxon>
        <taxon>Gammaproteobacteria</taxon>
        <taxon>Enterobacterales</taxon>
        <taxon>Enterobacteriaceae</taxon>
        <taxon>Shigella</taxon>
    </lineage>
</organism>
<comment type="function">
    <text evidence="1">Part of the ABC transporter complex AraFGH involved in arabinose import. Responsible for energy coupling to the transport system.</text>
</comment>
<comment type="catalytic activity">
    <reaction evidence="1">
        <text>L-arabinose(out) + ATP + H2O = L-arabinose(in) + ADP + phosphate + H(+)</text>
        <dbReference type="Rhea" id="RHEA:30007"/>
        <dbReference type="ChEBI" id="CHEBI:15377"/>
        <dbReference type="ChEBI" id="CHEBI:15378"/>
        <dbReference type="ChEBI" id="CHEBI:17535"/>
        <dbReference type="ChEBI" id="CHEBI:30616"/>
        <dbReference type="ChEBI" id="CHEBI:43474"/>
        <dbReference type="ChEBI" id="CHEBI:456216"/>
        <dbReference type="EC" id="7.5.2.12"/>
    </reaction>
</comment>
<comment type="subunit">
    <text evidence="1">The complex is composed of two ATP-binding proteins (AraG), two transmembrane proteins (AraH) and a solute-binding protein (AraF).</text>
</comment>
<comment type="subcellular location">
    <subcellularLocation>
        <location evidence="1">Cell inner membrane</location>
        <topology evidence="1">Peripheral membrane protein</topology>
    </subcellularLocation>
</comment>
<comment type="similarity">
    <text evidence="1">Belongs to the ABC transporter superfamily. Arabinose importer (TC 3.A.1.2.2) family.</text>
</comment>
<feature type="chain" id="PRO_0000270481" description="Arabinose import ATP-binding protein AraG">
    <location>
        <begin position="1"/>
        <end position="504"/>
    </location>
</feature>
<feature type="domain" description="ABC transporter 1" evidence="1">
    <location>
        <begin position="8"/>
        <end position="243"/>
    </location>
</feature>
<feature type="domain" description="ABC transporter 2" evidence="1">
    <location>
        <begin position="256"/>
        <end position="499"/>
    </location>
</feature>
<feature type="binding site" evidence="1">
    <location>
        <begin position="40"/>
        <end position="47"/>
    </location>
    <ligand>
        <name>ATP</name>
        <dbReference type="ChEBI" id="CHEBI:30616"/>
    </ligand>
</feature>